<dbReference type="EC" id="4.2.1.3" evidence="1"/>
<dbReference type="EMBL" id="AC007170">
    <property type="protein sequence ID" value="AAD25640.1"/>
    <property type="status" value="ALT_INIT"/>
    <property type="molecule type" value="Genomic_DNA"/>
</dbReference>
<dbReference type="EMBL" id="CP002685">
    <property type="protein sequence ID" value="AEC05964.1"/>
    <property type="molecule type" value="Genomic_DNA"/>
</dbReference>
<dbReference type="EMBL" id="AY136414">
    <property type="protein sequence ID" value="AAM97080.1"/>
    <property type="molecule type" value="mRNA"/>
</dbReference>
<dbReference type="EMBL" id="BT008809">
    <property type="protein sequence ID" value="AAP68248.1"/>
    <property type="molecule type" value="mRNA"/>
</dbReference>
<dbReference type="PIR" id="B84471">
    <property type="entry name" value="B84471"/>
</dbReference>
<dbReference type="RefSeq" id="NP_178634.2">
    <property type="nucleotide sequence ID" value="NM_126589.3"/>
</dbReference>
<dbReference type="SMR" id="Q9SIB9"/>
<dbReference type="BioGRID" id="519">
    <property type="interactions" value="23"/>
</dbReference>
<dbReference type="FunCoup" id="Q9SIB9">
    <property type="interactions" value="3346"/>
</dbReference>
<dbReference type="IntAct" id="Q9SIB9">
    <property type="interactions" value="1"/>
</dbReference>
<dbReference type="STRING" id="3702.Q9SIB9"/>
<dbReference type="iPTMnet" id="Q9SIB9"/>
<dbReference type="MetOSite" id="Q9SIB9"/>
<dbReference type="PaxDb" id="3702-AT2G05710.1"/>
<dbReference type="ProteomicsDB" id="243283"/>
<dbReference type="EnsemblPlants" id="AT2G05710.1">
    <property type="protein sequence ID" value="AT2G05710.1"/>
    <property type="gene ID" value="AT2G05710"/>
</dbReference>
<dbReference type="GeneID" id="815120"/>
<dbReference type="Gramene" id="AT2G05710.1">
    <property type="protein sequence ID" value="AT2G05710.1"/>
    <property type="gene ID" value="AT2G05710"/>
</dbReference>
<dbReference type="KEGG" id="ath:AT2G05710"/>
<dbReference type="Araport" id="AT2G05710"/>
<dbReference type="TAIR" id="AT2G05710">
    <property type="gene designation" value="ACO3"/>
</dbReference>
<dbReference type="eggNOG" id="KOG0452">
    <property type="taxonomic scope" value="Eukaryota"/>
</dbReference>
<dbReference type="HOGENOM" id="CLU_013476_2_1_1"/>
<dbReference type="InParanoid" id="Q9SIB9"/>
<dbReference type="OMA" id="SHRLHWR"/>
<dbReference type="PhylomeDB" id="Q9SIB9"/>
<dbReference type="BRENDA" id="4.2.1.3">
    <property type="organism ID" value="399"/>
</dbReference>
<dbReference type="UniPathway" id="UPA00223">
    <property type="reaction ID" value="UER00718"/>
</dbReference>
<dbReference type="CD-CODE" id="4299E36E">
    <property type="entry name" value="Nucleolus"/>
</dbReference>
<dbReference type="PRO" id="PR:Q9SIB9"/>
<dbReference type="Proteomes" id="UP000006548">
    <property type="component" value="Chromosome 2"/>
</dbReference>
<dbReference type="ExpressionAtlas" id="Q9SIB9">
    <property type="expression patterns" value="baseline and differential"/>
</dbReference>
<dbReference type="GO" id="GO:0009507">
    <property type="term" value="C:chloroplast"/>
    <property type="evidence" value="ECO:0000314"/>
    <property type="project" value="TAIR"/>
</dbReference>
<dbReference type="GO" id="GO:0009570">
    <property type="term" value="C:chloroplast stroma"/>
    <property type="evidence" value="ECO:0007005"/>
    <property type="project" value="TAIR"/>
</dbReference>
<dbReference type="GO" id="GO:0005737">
    <property type="term" value="C:cytoplasm"/>
    <property type="evidence" value="ECO:0000314"/>
    <property type="project" value="UniProtKB"/>
</dbReference>
<dbReference type="GO" id="GO:0005829">
    <property type="term" value="C:cytosol"/>
    <property type="evidence" value="ECO:0000314"/>
    <property type="project" value="UniProtKB"/>
</dbReference>
<dbReference type="GO" id="GO:0005739">
    <property type="term" value="C:mitochondrion"/>
    <property type="evidence" value="ECO:0000314"/>
    <property type="project" value="UniProtKB"/>
</dbReference>
<dbReference type="GO" id="GO:0009505">
    <property type="term" value="C:plant-type cell wall"/>
    <property type="evidence" value="ECO:0007005"/>
    <property type="project" value="TAIR"/>
</dbReference>
<dbReference type="GO" id="GO:0000325">
    <property type="term" value="C:plant-type vacuole"/>
    <property type="evidence" value="ECO:0007005"/>
    <property type="project" value="TAIR"/>
</dbReference>
<dbReference type="GO" id="GO:0051539">
    <property type="term" value="F:4 iron, 4 sulfur cluster binding"/>
    <property type="evidence" value="ECO:0007669"/>
    <property type="project" value="UniProtKB-KW"/>
</dbReference>
<dbReference type="GO" id="GO:0003994">
    <property type="term" value="F:aconitate hydratase activity"/>
    <property type="evidence" value="ECO:0000315"/>
    <property type="project" value="UniProtKB"/>
</dbReference>
<dbReference type="GO" id="GO:0005524">
    <property type="term" value="F:ATP binding"/>
    <property type="evidence" value="ECO:0007005"/>
    <property type="project" value="TAIR"/>
</dbReference>
<dbReference type="GO" id="GO:0005507">
    <property type="term" value="F:copper ion binding"/>
    <property type="evidence" value="ECO:0007005"/>
    <property type="project" value="TAIR"/>
</dbReference>
<dbReference type="GO" id="GO:0006101">
    <property type="term" value="P:citrate metabolic process"/>
    <property type="evidence" value="ECO:0000315"/>
    <property type="project" value="UniProtKB"/>
</dbReference>
<dbReference type="GO" id="GO:0006097">
    <property type="term" value="P:glyoxylate cycle"/>
    <property type="evidence" value="ECO:0007669"/>
    <property type="project" value="UniProtKB-KW"/>
</dbReference>
<dbReference type="GO" id="GO:0006102">
    <property type="term" value="P:isocitrate metabolic process"/>
    <property type="evidence" value="ECO:0000315"/>
    <property type="project" value="TAIR"/>
</dbReference>
<dbReference type="GO" id="GO:0009737">
    <property type="term" value="P:response to abscisic acid"/>
    <property type="evidence" value="ECO:0000270"/>
    <property type="project" value="TAIR"/>
</dbReference>
<dbReference type="GO" id="GO:0006979">
    <property type="term" value="P:response to oxidative stress"/>
    <property type="evidence" value="ECO:0000315"/>
    <property type="project" value="TAIR"/>
</dbReference>
<dbReference type="GO" id="GO:0090351">
    <property type="term" value="P:seedling development"/>
    <property type="evidence" value="ECO:0000315"/>
    <property type="project" value="UniProtKB"/>
</dbReference>
<dbReference type="GO" id="GO:0006099">
    <property type="term" value="P:tricarboxylic acid cycle"/>
    <property type="evidence" value="ECO:0007669"/>
    <property type="project" value="UniProtKB-UniPathway"/>
</dbReference>
<dbReference type="CDD" id="cd01586">
    <property type="entry name" value="AcnA_IRP"/>
    <property type="match status" value="1"/>
</dbReference>
<dbReference type="CDD" id="cd01580">
    <property type="entry name" value="AcnA_IRP_Swivel"/>
    <property type="match status" value="1"/>
</dbReference>
<dbReference type="FunFam" id="3.20.19.10:FF:000001">
    <property type="entry name" value="Aconitate hydratase"/>
    <property type="match status" value="1"/>
</dbReference>
<dbReference type="FunFam" id="3.30.499.10:FF:000002">
    <property type="entry name" value="Aconitate hydratase"/>
    <property type="match status" value="1"/>
</dbReference>
<dbReference type="FunFam" id="3.30.499.10:FF:000005">
    <property type="entry name" value="cytoplasmic aconitate hydratase"/>
    <property type="match status" value="1"/>
</dbReference>
<dbReference type="Gene3D" id="6.10.190.10">
    <property type="match status" value="1"/>
</dbReference>
<dbReference type="Gene3D" id="3.30.499.10">
    <property type="entry name" value="Aconitase, domain 3"/>
    <property type="match status" value="2"/>
</dbReference>
<dbReference type="Gene3D" id="3.20.19.10">
    <property type="entry name" value="Aconitase, domain 4"/>
    <property type="match status" value="1"/>
</dbReference>
<dbReference type="InterPro" id="IPR044137">
    <property type="entry name" value="AcnA_IRP_Swivel"/>
</dbReference>
<dbReference type="InterPro" id="IPR015931">
    <property type="entry name" value="Acnase/IPM_dHydase_lsu_aba_1/3"/>
</dbReference>
<dbReference type="InterPro" id="IPR001030">
    <property type="entry name" value="Acoase/IPM_deHydtase_lsu_aba"/>
</dbReference>
<dbReference type="InterPro" id="IPR015928">
    <property type="entry name" value="Aconitase/3IPM_dehydase_swvl"/>
</dbReference>
<dbReference type="InterPro" id="IPR006249">
    <property type="entry name" value="Aconitase/IRP2"/>
</dbReference>
<dbReference type="InterPro" id="IPR018136">
    <property type="entry name" value="Aconitase_4Fe-4S_BS"/>
</dbReference>
<dbReference type="InterPro" id="IPR036008">
    <property type="entry name" value="Aconitase_4Fe-4S_dom"/>
</dbReference>
<dbReference type="InterPro" id="IPR000573">
    <property type="entry name" value="AconitaseA/IPMdHydase_ssu_swvl"/>
</dbReference>
<dbReference type="NCBIfam" id="TIGR01341">
    <property type="entry name" value="aconitase_1"/>
    <property type="match status" value="1"/>
</dbReference>
<dbReference type="NCBIfam" id="NF006757">
    <property type="entry name" value="PRK09277.1"/>
    <property type="match status" value="1"/>
</dbReference>
<dbReference type="NCBIfam" id="NF009520">
    <property type="entry name" value="PRK12881.1"/>
    <property type="match status" value="1"/>
</dbReference>
<dbReference type="PANTHER" id="PTHR11670">
    <property type="entry name" value="ACONITASE/IRON-RESPONSIVE ELEMENT FAMILY MEMBER"/>
    <property type="match status" value="1"/>
</dbReference>
<dbReference type="Pfam" id="PF00330">
    <property type="entry name" value="Aconitase"/>
    <property type="match status" value="1"/>
</dbReference>
<dbReference type="Pfam" id="PF00694">
    <property type="entry name" value="Aconitase_C"/>
    <property type="match status" value="1"/>
</dbReference>
<dbReference type="PRINTS" id="PR00415">
    <property type="entry name" value="ACONITASE"/>
</dbReference>
<dbReference type="SUPFAM" id="SSF53732">
    <property type="entry name" value="Aconitase iron-sulfur domain"/>
    <property type="match status" value="1"/>
</dbReference>
<dbReference type="SUPFAM" id="SSF52016">
    <property type="entry name" value="LeuD/IlvD-like"/>
    <property type="match status" value="1"/>
</dbReference>
<dbReference type="PROSITE" id="PS00450">
    <property type="entry name" value="ACONITASE_1"/>
    <property type="match status" value="1"/>
</dbReference>
<dbReference type="PROSITE" id="PS01244">
    <property type="entry name" value="ACONITASE_2"/>
    <property type="match status" value="1"/>
</dbReference>
<name>ACO3M_ARATH</name>
<accession>Q9SIB9</accession>
<accession>Q8L784</accession>
<gene>
    <name evidence="10" type="primary">ACO3</name>
    <name evidence="12" type="ordered locus">At2g05710</name>
    <name evidence="13" type="ORF">T3P4.5</name>
</gene>
<protein>
    <recommendedName>
        <fullName evidence="10">Aconitate hydratase 3, mitochondrial</fullName>
        <shortName evidence="10">Aconitase 3</shortName>
        <shortName evidence="9">mACO1</shortName>
        <ecNumber evidence="1">4.2.1.3</ecNumber>
    </recommendedName>
    <alternativeName>
        <fullName evidence="10">Citrate hydro-lyase 3</fullName>
    </alternativeName>
</protein>
<keyword id="KW-0004">4Fe-4S</keyword>
<keyword id="KW-0963">Cytoplasm</keyword>
<keyword id="KW-0329">Glyoxylate bypass</keyword>
<keyword id="KW-0408">Iron</keyword>
<keyword id="KW-0411">Iron-sulfur</keyword>
<keyword id="KW-0456">Lyase</keyword>
<keyword id="KW-0479">Metal-binding</keyword>
<keyword id="KW-0496">Mitochondrion</keyword>
<keyword id="KW-0597">Phosphoprotein</keyword>
<keyword id="KW-1185">Reference proteome</keyword>
<keyword id="KW-0809">Transit peptide</keyword>
<keyword id="KW-0816">Tricarboxylic acid cycle</keyword>
<evidence type="ECO:0000250" key="1">
    <source>
        <dbReference type="UniProtKB" id="P19414"/>
    </source>
</evidence>
<evidence type="ECO:0000250" key="2">
    <source>
        <dbReference type="UniProtKB" id="P20004"/>
    </source>
</evidence>
<evidence type="ECO:0000255" key="3"/>
<evidence type="ECO:0000269" key="4">
    <source>
    </source>
</evidence>
<evidence type="ECO:0000269" key="5">
    <source>
    </source>
</evidence>
<evidence type="ECO:0000269" key="6">
    <source>
    </source>
</evidence>
<evidence type="ECO:0000269" key="7">
    <source>
    </source>
</evidence>
<evidence type="ECO:0000269" key="8">
    <source>
    </source>
</evidence>
<evidence type="ECO:0000303" key="9">
    <source>
    </source>
</evidence>
<evidence type="ECO:0000303" key="10">
    <source>
    </source>
</evidence>
<evidence type="ECO:0000305" key="11"/>
<evidence type="ECO:0000312" key="12">
    <source>
        <dbReference type="Araport" id="AT2G05710"/>
    </source>
</evidence>
<evidence type="ECO:0000312" key="13">
    <source>
        <dbReference type="EMBL" id="AAD25640.1"/>
    </source>
</evidence>
<reference key="1">
    <citation type="journal article" date="1999" name="Nature">
        <title>Sequence and analysis of chromosome 2 of the plant Arabidopsis thaliana.</title>
        <authorList>
            <person name="Lin X."/>
            <person name="Kaul S."/>
            <person name="Rounsley S.D."/>
            <person name="Shea T.P."/>
            <person name="Benito M.-I."/>
            <person name="Town C.D."/>
            <person name="Fujii C.Y."/>
            <person name="Mason T.M."/>
            <person name="Bowman C.L."/>
            <person name="Barnstead M.E."/>
            <person name="Feldblyum T.V."/>
            <person name="Buell C.R."/>
            <person name="Ketchum K.A."/>
            <person name="Lee J.J."/>
            <person name="Ronning C.M."/>
            <person name="Koo H.L."/>
            <person name="Moffat K.S."/>
            <person name="Cronin L.A."/>
            <person name="Shen M."/>
            <person name="Pai G."/>
            <person name="Van Aken S."/>
            <person name="Umayam L."/>
            <person name="Tallon L.J."/>
            <person name="Gill J.E."/>
            <person name="Adams M.D."/>
            <person name="Carrera A.J."/>
            <person name="Creasy T.H."/>
            <person name="Goodman H.M."/>
            <person name="Somerville C.R."/>
            <person name="Copenhaver G.P."/>
            <person name="Preuss D."/>
            <person name="Nierman W.C."/>
            <person name="White O."/>
            <person name="Eisen J.A."/>
            <person name="Salzberg S.L."/>
            <person name="Fraser C.M."/>
            <person name="Venter J.C."/>
        </authorList>
    </citation>
    <scope>NUCLEOTIDE SEQUENCE [LARGE SCALE GENOMIC DNA]</scope>
    <source>
        <strain>cv. Columbia</strain>
    </source>
</reference>
<reference key="2">
    <citation type="journal article" date="2017" name="Plant J.">
        <title>Araport11: a complete reannotation of the Arabidopsis thaliana reference genome.</title>
        <authorList>
            <person name="Cheng C.Y."/>
            <person name="Krishnakumar V."/>
            <person name="Chan A.P."/>
            <person name="Thibaud-Nissen F."/>
            <person name="Schobel S."/>
            <person name="Town C.D."/>
        </authorList>
    </citation>
    <scope>GENOME REANNOTATION</scope>
    <source>
        <strain>cv. Columbia</strain>
    </source>
</reference>
<reference key="3">
    <citation type="journal article" date="2003" name="Science">
        <title>Empirical analysis of transcriptional activity in the Arabidopsis genome.</title>
        <authorList>
            <person name="Yamada K."/>
            <person name="Lim J."/>
            <person name="Dale J.M."/>
            <person name="Chen H."/>
            <person name="Shinn P."/>
            <person name="Palm C.J."/>
            <person name="Southwick A.M."/>
            <person name="Wu H.C."/>
            <person name="Kim C.J."/>
            <person name="Nguyen M."/>
            <person name="Pham P.K."/>
            <person name="Cheuk R.F."/>
            <person name="Karlin-Newmann G."/>
            <person name="Liu S.X."/>
            <person name="Lam B."/>
            <person name="Sakano H."/>
            <person name="Wu T."/>
            <person name="Yu G."/>
            <person name="Miranda M."/>
            <person name="Quach H.L."/>
            <person name="Tripp M."/>
            <person name="Chang C.H."/>
            <person name="Lee J.M."/>
            <person name="Toriumi M.J."/>
            <person name="Chan M.M."/>
            <person name="Tang C.C."/>
            <person name="Onodera C.S."/>
            <person name="Deng J.M."/>
            <person name="Akiyama K."/>
            <person name="Ansari Y."/>
            <person name="Arakawa T."/>
            <person name="Banh J."/>
            <person name="Banno F."/>
            <person name="Bowser L."/>
            <person name="Brooks S.Y."/>
            <person name="Carninci P."/>
            <person name="Chao Q."/>
            <person name="Choy N."/>
            <person name="Enju A."/>
            <person name="Goldsmith A.D."/>
            <person name="Gurjal M."/>
            <person name="Hansen N.F."/>
            <person name="Hayashizaki Y."/>
            <person name="Johnson-Hopson C."/>
            <person name="Hsuan V.W."/>
            <person name="Iida K."/>
            <person name="Karnes M."/>
            <person name="Khan S."/>
            <person name="Koesema E."/>
            <person name="Ishida J."/>
            <person name="Jiang P.X."/>
            <person name="Jones T."/>
            <person name="Kawai J."/>
            <person name="Kamiya A."/>
            <person name="Meyers C."/>
            <person name="Nakajima M."/>
            <person name="Narusaka M."/>
            <person name="Seki M."/>
            <person name="Sakurai T."/>
            <person name="Satou M."/>
            <person name="Tamse R."/>
            <person name="Vaysberg M."/>
            <person name="Wallender E.K."/>
            <person name="Wong C."/>
            <person name="Yamamura Y."/>
            <person name="Yuan S."/>
            <person name="Shinozaki K."/>
            <person name="Davis R.W."/>
            <person name="Theologis A."/>
            <person name="Ecker J.R."/>
        </authorList>
    </citation>
    <scope>NUCLEOTIDE SEQUENCE [LARGE SCALE MRNA]</scope>
    <source>
        <strain>cv. Columbia</strain>
    </source>
</reference>
<reference key="4">
    <citation type="journal article" date="2004" name="Plant Cell">
        <title>Experimental analysis of the Arabidopsis mitochondrial proteome highlights signaling and regulatory components, provides assessment of targeting prediction programs, and indicates plant-specific mitochondrial proteins.</title>
        <authorList>
            <person name="Heazlewood J.L."/>
            <person name="Tonti-Filippini J.S."/>
            <person name="Gout A.M."/>
            <person name="Day D.A."/>
            <person name="Whelan J."/>
            <person name="Millar A.H."/>
        </authorList>
    </citation>
    <scope>IDENTIFICATION BY MASS SPECTROMETRY</scope>
    <scope>SUBCELLULAR LOCATION [LARGE SCALE ANALYSIS]</scope>
    <source>
        <strain>cv. Landsberg erecta</strain>
    </source>
</reference>
<reference key="5">
    <citation type="journal article" date="2007" name="Biochem. J.">
        <title>The iron-responsive element (IRE)/iron-regulatory protein 1 (IRP1)-cytosolic aconitase iron-regulatory switch does not operate in plants.</title>
        <authorList>
            <person name="Arnaud N."/>
            <person name="Ravet K."/>
            <person name="Borlotti A."/>
            <person name="Touraine B."/>
            <person name="Boucherez J."/>
            <person name="Fizames C."/>
            <person name="Briat J.F."/>
            <person name="Cellier F."/>
            <person name="Gaymard F."/>
        </authorList>
    </citation>
    <scope>DISRUPTION PHENOTYPE</scope>
    <scope>TISSUE SPECIFICITY</scope>
    <scope>GENE FAMILY</scope>
    <source>
        <strain>cv. Columbia</strain>
    </source>
</reference>
<reference key="6">
    <citation type="journal article" date="2007" name="Plant Mol. Biol.">
        <title>Aconitase plays a role in regulating resistance to oxidative stress and cell death in Arabidopsis and Nicotiana benthamiana.</title>
        <authorList>
            <person name="Moeder W."/>
            <person name="Del Pozo O."/>
            <person name="Navarre D.A."/>
            <person name="Martin G.B."/>
            <person name="Klessig D.F."/>
        </authorList>
    </citation>
    <scope>FUNCTION</scope>
    <scope>DISRUPTION PHENOTYPE</scope>
</reference>
<reference key="7">
    <citation type="journal article" date="2009" name="Plant Physiol.">
        <title>Large-scale Arabidopsis phosphoproteome profiling reveals novel chloroplast kinase substrates and phosphorylation networks.</title>
        <authorList>
            <person name="Reiland S."/>
            <person name="Messerli G."/>
            <person name="Baerenfaller K."/>
            <person name="Gerrits B."/>
            <person name="Endler A."/>
            <person name="Grossmann J."/>
            <person name="Gruissem W."/>
            <person name="Baginsky S."/>
        </authorList>
    </citation>
    <scope>IDENTIFICATION BY MASS SPECTROMETRY [LARGE SCALE ANALYSIS]</scope>
</reference>
<reference key="8">
    <citation type="journal article" date="2014" name="Biochem. J.">
        <title>Selective induction and subcellular distribution of ACONITASE 3 reveal the importance of cytosolic citrate metabolism during lipid mobilization in Arabidopsis.</title>
        <authorList>
            <person name="Hooks M.A."/>
            <person name="Allwood J.W."/>
            <person name="Harrison J.K."/>
            <person name="Kopka J."/>
            <person name="Erban A."/>
            <person name="Goodacre R."/>
            <person name="Balk J."/>
        </authorList>
    </citation>
    <scope>FUNCTION</scope>
    <scope>DISRUPTION PHENOTYPE</scope>
    <scope>TISSUE SPECIFICITY</scope>
    <scope>INDUCTION DURING GERMINATION</scope>
    <scope>SUBCELLULAR LOCATION</scope>
    <source>
        <strain>cv. Columbia</strain>
    </source>
</reference>
<reference key="9">
    <citation type="journal article" date="2014" name="Plant Physiol.">
        <title>Selected reaction monitoring to determine protein abundance in Arabidopsis using the Arabidopsis proteotypic predictor.</title>
        <authorList>
            <person name="Taylor N.L."/>
            <person name="Fenske R."/>
            <person name="Castleden I."/>
            <person name="Tomaz T."/>
            <person name="Nelson C.J."/>
            <person name="Millar A.H."/>
        </authorList>
    </citation>
    <scope>GENE FAMILY</scope>
    <scope>IDENTIFICATION BY MASS SPECTROMETRY</scope>
</reference>
<reference key="10">
    <citation type="journal article" date="2015" name="New Phytol.">
        <title>Protein phosphatase 2A (PP2A) regulatory subunit B'gamma interacts with cytoplasmic ACONITASE 3 and modulates the abundance of AOX1A and AOX1D in Arabidopsis thaliana.</title>
        <authorList>
            <person name="Konert G."/>
            <person name="Trotta A."/>
            <person name="Kouvonen P."/>
            <person name="Rahikainen M."/>
            <person name="Durian G."/>
            <person name="Blokhina O."/>
            <person name="Fagerstedt K."/>
            <person name="Muth D."/>
            <person name="Corthals G.L."/>
            <person name="Kangasjaervi S."/>
        </authorList>
    </citation>
    <scope>INTERACTION WITH B'GAMMA</scope>
    <scope>IDENTIFICATION BY MASS SPECTROMETRY</scope>
    <scope>SUBCELLULAR LOCATION</scope>
    <scope>PHOSPHORYLATION AT SER-91</scope>
    <source>
        <strain>cv. Columbia</strain>
    </source>
</reference>
<feature type="transit peptide" description="Mitochondrion" evidence="3">
    <location>
        <begin position="1"/>
        <end position="78"/>
    </location>
</feature>
<feature type="chain" id="PRO_0000259921" description="Aconitate hydratase 3, mitochondrial">
    <location>
        <begin position="79"/>
        <end position="990"/>
    </location>
</feature>
<feature type="binding site" evidence="2">
    <location>
        <position position="182"/>
    </location>
    <ligand>
        <name>substrate</name>
    </ligand>
</feature>
<feature type="binding site" evidence="2">
    <location>
        <begin position="301"/>
        <end position="303"/>
    </location>
    <ligand>
        <name>substrate</name>
    </ligand>
</feature>
<feature type="binding site" evidence="2">
    <location>
        <position position="533"/>
    </location>
    <ligand>
        <name>[4Fe-4S] cluster</name>
        <dbReference type="ChEBI" id="CHEBI:49883"/>
    </ligand>
</feature>
<feature type="binding site" evidence="2">
    <location>
        <position position="599"/>
    </location>
    <ligand>
        <name>[4Fe-4S] cluster</name>
        <dbReference type="ChEBI" id="CHEBI:49883"/>
    </ligand>
</feature>
<feature type="binding site" evidence="2">
    <location>
        <position position="602"/>
    </location>
    <ligand>
        <name>[4Fe-4S] cluster</name>
        <dbReference type="ChEBI" id="CHEBI:49883"/>
    </ligand>
</feature>
<feature type="binding site" evidence="2">
    <location>
        <position position="632"/>
    </location>
    <ligand>
        <name>substrate</name>
    </ligand>
</feature>
<feature type="binding site" evidence="2">
    <location>
        <position position="637"/>
    </location>
    <ligand>
        <name>substrate</name>
    </ligand>
</feature>
<feature type="binding site" evidence="2">
    <location>
        <position position="795"/>
    </location>
    <ligand>
        <name>substrate</name>
    </ligand>
</feature>
<feature type="binding site" evidence="2">
    <location>
        <begin position="876"/>
        <end position="877"/>
    </location>
    <ligand>
        <name>substrate</name>
    </ligand>
</feature>
<feature type="modified residue" description="Phosphoserine" evidence="8">
    <location>
        <position position="91"/>
    </location>
</feature>
<organism>
    <name type="scientific">Arabidopsis thaliana</name>
    <name type="common">Mouse-ear cress</name>
    <dbReference type="NCBI Taxonomy" id="3702"/>
    <lineage>
        <taxon>Eukaryota</taxon>
        <taxon>Viridiplantae</taxon>
        <taxon>Streptophyta</taxon>
        <taxon>Embryophyta</taxon>
        <taxon>Tracheophyta</taxon>
        <taxon>Spermatophyta</taxon>
        <taxon>Magnoliopsida</taxon>
        <taxon>eudicotyledons</taxon>
        <taxon>Gunneridae</taxon>
        <taxon>Pentapetalae</taxon>
        <taxon>rosids</taxon>
        <taxon>malvids</taxon>
        <taxon>Brassicales</taxon>
        <taxon>Brassicaceae</taxon>
        <taxon>Camelineae</taxon>
        <taxon>Arabidopsis</taxon>
    </lineage>
</organism>
<comment type="function">
    <text evidence="5 7">Catalyzes the isomerization of citrate to isocitrate via cis-aconitate. Contributes to oxidative stress tolerance (PubMed:17013749). Modulates cytosolic citrate metabolism during lipid mobilization. Required during seedling growth (PubMed:25061985).</text>
</comment>
<comment type="catalytic activity">
    <reaction evidence="1">
        <text>citrate = D-threo-isocitrate</text>
        <dbReference type="Rhea" id="RHEA:10336"/>
        <dbReference type="ChEBI" id="CHEBI:15562"/>
        <dbReference type="ChEBI" id="CHEBI:16947"/>
        <dbReference type="EC" id="4.2.1.3"/>
    </reaction>
</comment>
<comment type="cofactor">
    <cofactor evidence="2">
        <name>[4Fe-4S] cluster</name>
        <dbReference type="ChEBI" id="CHEBI:49883"/>
    </cofactor>
    <text evidence="2">Binds 1 [4Fe-4S] cluster per subunit.</text>
</comment>
<comment type="pathway">
    <text evidence="1">Carbohydrate metabolism; tricarboxylic acid cycle; isocitrate from oxaloacetate: step 2/2.</text>
</comment>
<comment type="subunit">
    <text evidence="2 8">Monomer (By similarity). Interacts with B'GAMMA in the cytosol (PubMed:25307043).</text>
</comment>
<comment type="subcellular location">
    <subcellularLocation>
        <location evidence="4 7">Mitochondrion</location>
    </subcellularLocation>
    <subcellularLocation>
        <location evidence="7 8">Cytoplasm</location>
    </subcellularLocation>
    <text evidence="7">Cytosolic localization in 3-day-old seedlings, but mitochondrial in 10-day-old plantlets.</text>
</comment>
<comment type="tissue specificity">
    <text evidence="6 7">Major aconitase isoenzyme in young seedlings (PubMed:25061985). Expressed in roots, leaves, stems and flowers, and, at low levels, in seeds (PubMed:17437406).</text>
</comment>
<comment type="induction">
    <text evidence="7">Transiently induced during germination.</text>
</comment>
<comment type="PTM">
    <text evidence="8">Phosphorylated at Ser-91 in the cytoplasm; this phosphorylation requires the presence of B'GAMMA.</text>
</comment>
<comment type="disruption phenotype">
    <text evidence="5 6 7">Reduced cytosolic and mitochondrial aconitase (ACO) activities by 25 and 55 precent, respectively (PubMed:17013749, PubMed:17437406). Increased tolerance to oxidative stress mediated by paraquat, a superoxide-generating agent (PubMed:17013749). Delayed early seedling growth, altered assimilation of acetate feeding and elevated citrate and malate levels (PubMed:25061985).</text>
</comment>
<comment type="similarity">
    <text evidence="11">Belongs to the aconitase/IPM isomerase family.</text>
</comment>
<comment type="sequence caution" evidence="11">
    <conflict type="erroneous initiation">
        <sequence resource="EMBL-CDS" id="AAD25640"/>
    </conflict>
    <text>Truncated N-terminus.</text>
</comment>
<proteinExistence type="evidence at protein level"/>
<sequence length="990" mass="108201">MYLTASSSASSSIIRAASSRSSSLFSFRSVLSPSVSSTSPSSLLARRSFGTISPAFRRWSHSFHSKPSPFRFTSQIRAVSPVLDRLQRTFSSMASEHPFKGIFTTLPKPGGGEFGKFYSLPALNDPRVDKLPYSIRILLESAIRNCDNFQVTKEDVEKIIDWEKTSPKQVEIPFKPARVLLQDFTGVPAVVDLACMRDAMNKLGSDSNKINPLVPVDLVIDHSVQVDVARSENAVQANMELEFQRNKERFAFLKWGSTAFQNMLVVPPGSGIVHQVNLEYLGRVVFNTKGLLYPDSVVGTDSHTTMIDGLGVAGWGVGGIEAEATMLGQPMSMVLPGVVGFKLAGKMRNGVTATDLVLTVTQMLRKHGVVGKFVEFYGNGMSGLSLADRATIANMSPEYGATMGFFPVDHVTLQYLKLTGRSDETVAMIEAYLRANNMFVDYNEPQQDRVYSSYLELNLDDVEPCISGPKRPHDRVTLKEMKADWHSCLDSKVGFKGFAIPKEAQEKVVNFSFDGQPAELKHGSVVIAAITSCTNTSNPSVMLGAGLVAKKACDLGLQVKPWIKTSLAPGSGVVTKYLLKSGLQEYLNEQGFNIVGYGCTTCIGNSGEINESVGAAITENDIVAAAVLSGNRNFEGRVHPLTRANYLASPPLVVAYALAGTVNIDFETEPIGKGKNGKDVFLRDIWPTTEEIAEVVQSSVLPDMFRATYESITKGNPMWNKLSVPENTLYSWDPNSTYIHEPPYFKDMTMDPPGPHNVKDAYCLLNFGDSITTDHISPAGNIQKDSPAAKFLMERGVDRKDFNSYGSRRGNDEIMARGTFANIRIVNKLMNGEVGPKTVHIPSGEKLSVFDAAMRYKSSGEDTIILAGAEYGSGSSRDWAAKGPMLQGVKAVIAKSFERIHRSNLVGMGIIPLCFKSGEDADTLGLTGHERYTIHLPTDISEIRPGQDVTVTTDNGKSFTCTVRFDTEVELAYFNHGGILPYVIRNLSKQ</sequence>